<dbReference type="EC" id="4.2.1.24"/>
<dbReference type="EMBL" id="J03493">
    <property type="protein sequence ID" value="AAA34669.1"/>
    <property type="molecule type" value="Genomic_DNA"/>
</dbReference>
<dbReference type="EMBL" id="Z72562">
    <property type="protein sequence ID" value="CAA96742.1"/>
    <property type="molecule type" value="Genomic_DNA"/>
</dbReference>
<dbReference type="EMBL" id="AY692744">
    <property type="protein sequence ID" value="AAT92763.1"/>
    <property type="molecule type" value="Genomic_DNA"/>
</dbReference>
<dbReference type="EMBL" id="BK006941">
    <property type="protein sequence ID" value="DAA08060.1"/>
    <property type="molecule type" value="Genomic_DNA"/>
</dbReference>
<dbReference type="PIR" id="S64042">
    <property type="entry name" value="S64042"/>
</dbReference>
<dbReference type="RefSeq" id="NP_011475.1">
    <property type="nucleotide sequence ID" value="NM_001180905.1"/>
</dbReference>
<dbReference type="PDB" id="1AW5">
    <property type="method" value="X-ray"/>
    <property type="resolution" value="2.30 A"/>
    <property type="chains" value="A=1-340"/>
</dbReference>
<dbReference type="PDB" id="1EB3">
    <property type="method" value="X-ray"/>
    <property type="resolution" value="1.75 A"/>
    <property type="chains" value="A=1-340"/>
</dbReference>
<dbReference type="PDB" id="1GJP">
    <property type="method" value="X-ray"/>
    <property type="resolution" value="1.80 A"/>
    <property type="chains" value="A=1-340"/>
</dbReference>
<dbReference type="PDB" id="1H7N">
    <property type="method" value="X-ray"/>
    <property type="resolution" value="1.60 A"/>
    <property type="chains" value="A=1-342"/>
</dbReference>
<dbReference type="PDB" id="1H7O">
    <property type="method" value="X-ray"/>
    <property type="resolution" value="1.75 A"/>
    <property type="chains" value="A=1-341"/>
</dbReference>
<dbReference type="PDB" id="1H7P">
    <property type="method" value="X-ray"/>
    <property type="resolution" value="1.64 A"/>
    <property type="chains" value="A=1-342"/>
</dbReference>
<dbReference type="PDB" id="1H7R">
    <property type="method" value="X-ray"/>
    <property type="resolution" value="2.00 A"/>
    <property type="chains" value="A=1-342"/>
</dbReference>
<dbReference type="PDB" id="1OHL">
    <property type="method" value="X-ray"/>
    <property type="resolution" value="1.60 A"/>
    <property type="chains" value="A=1-342"/>
</dbReference>
<dbReference type="PDB" id="1QML">
    <property type="method" value="X-ray"/>
    <property type="resolution" value="3.00 A"/>
    <property type="chains" value="A=1-342"/>
</dbReference>
<dbReference type="PDB" id="1QNV">
    <property type="method" value="X-ray"/>
    <property type="resolution" value="2.50 A"/>
    <property type="chains" value="A=1-342"/>
</dbReference>
<dbReference type="PDB" id="1W31">
    <property type="method" value="X-ray"/>
    <property type="resolution" value="1.90 A"/>
    <property type="chains" value="A=1-342"/>
</dbReference>
<dbReference type="PDB" id="1YLV">
    <property type="method" value="X-ray"/>
    <property type="resolution" value="2.15 A"/>
    <property type="chains" value="A=1-342"/>
</dbReference>
<dbReference type="PDBsum" id="1AW5"/>
<dbReference type="PDBsum" id="1EB3"/>
<dbReference type="PDBsum" id="1GJP"/>
<dbReference type="PDBsum" id="1H7N"/>
<dbReference type="PDBsum" id="1H7O"/>
<dbReference type="PDBsum" id="1H7P"/>
<dbReference type="PDBsum" id="1H7R"/>
<dbReference type="PDBsum" id="1OHL"/>
<dbReference type="PDBsum" id="1QML"/>
<dbReference type="PDBsum" id="1QNV"/>
<dbReference type="PDBsum" id="1W31"/>
<dbReference type="PDBsum" id="1YLV"/>
<dbReference type="SMR" id="P05373"/>
<dbReference type="BioGRID" id="33206">
    <property type="interactions" value="81"/>
</dbReference>
<dbReference type="DIP" id="DIP-4311N"/>
<dbReference type="FunCoup" id="P05373">
    <property type="interactions" value="781"/>
</dbReference>
<dbReference type="IntAct" id="P05373">
    <property type="interactions" value="3"/>
</dbReference>
<dbReference type="MINT" id="P05373"/>
<dbReference type="STRING" id="4932.YGL040C"/>
<dbReference type="iPTMnet" id="P05373"/>
<dbReference type="PaxDb" id="4932-YGL040C"/>
<dbReference type="PeptideAtlas" id="P05373"/>
<dbReference type="EnsemblFungi" id="YGL040C_mRNA">
    <property type="protein sequence ID" value="YGL040C"/>
    <property type="gene ID" value="YGL040C"/>
</dbReference>
<dbReference type="GeneID" id="852842"/>
<dbReference type="KEGG" id="sce:YGL040C"/>
<dbReference type="AGR" id="SGD:S000003008"/>
<dbReference type="SGD" id="S000003008">
    <property type="gene designation" value="HEM2"/>
</dbReference>
<dbReference type="VEuPathDB" id="FungiDB:YGL040C"/>
<dbReference type="eggNOG" id="KOG2794">
    <property type="taxonomic scope" value="Eukaryota"/>
</dbReference>
<dbReference type="GeneTree" id="ENSGT00390000006998"/>
<dbReference type="HOGENOM" id="CLU_035731_0_1_1"/>
<dbReference type="InParanoid" id="P05373"/>
<dbReference type="OMA" id="YQMDYAN"/>
<dbReference type="OrthoDB" id="1530at2759"/>
<dbReference type="BioCyc" id="YEAST:YGL040C-MONOMER"/>
<dbReference type="BRENDA" id="4.2.1.24">
    <property type="organism ID" value="984"/>
</dbReference>
<dbReference type="Reactome" id="R-SCE-189451">
    <property type="pathway name" value="Heme biosynthesis"/>
</dbReference>
<dbReference type="Reactome" id="R-SCE-6798695">
    <property type="pathway name" value="Neutrophil degranulation"/>
</dbReference>
<dbReference type="UniPathway" id="UPA00251">
    <property type="reaction ID" value="UER00318"/>
</dbReference>
<dbReference type="BioGRID-ORCS" id="852842">
    <property type="hits" value="0 hits in 10 CRISPR screens"/>
</dbReference>
<dbReference type="EvolutionaryTrace" id="P05373"/>
<dbReference type="PRO" id="PR:P05373"/>
<dbReference type="Proteomes" id="UP000002311">
    <property type="component" value="Chromosome VII"/>
</dbReference>
<dbReference type="RNAct" id="P05373">
    <property type="molecule type" value="protein"/>
</dbReference>
<dbReference type="GO" id="GO:0005737">
    <property type="term" value="C:cytoplasm"/>
    <property type="evidence" value="ECO:0007005"/>
    <property type="project" value="SGD"/>
</dbReference>
<dbReference type="GO" id="GO:0005829">
    <property type="term" value="C:cytosol"/>
    <property type="evidence" value="ECO:0000318"/>
    <property type="project" value="GO_Central"/>
</dbReference>
<dbReference type="GO" id="GO:0005634">
    <property type="term" value="C:nucleus"/>
    <property type="evidence" value="ECO:0007005"/>
    <property type="project" value="SGD"/>
</dbReference>
<dbReference type="GO" id="GO:0004655">
    <property type="term" value="F:porphobilinogen synthase activity"/>
    <property type="evidence" value="ECO:0000314"/>
    <property type="project" value="SGD"/>
</dbReference>
<dbReference type="GO" id="GO:0008270">
    <property type="term" value="F:zinc ion binding"/>
    <property type="evidence" value="ECO:0000314"/>
    <property type="project" value="SGD"/>
</dbReference>
<dbReference type="GO" id="GO:0006783">
    <property type="term" value="P:heme biosynthetic process"/>
    <property type="evidence" value="ECO:0000315"/>
    <property type="project" value="SGD"/>
</dbReference>
<dbReference type="GO" id="GO:0006782">
    <property type="term" value="P:protoporphyrinogen IX biosynthetic process"/>
    <property type="evidence" value="ECO:0007669"/>
    <property type="project" value="UniProtKB-UniPathway"/>
</dbReference>
<dbReference type="CDD" id="cd04824">
    <property type="entry name" value="eu_ALAD_PBGS_cysteine_rich"/>
    <property type="match status" value="1"/>
</dbReference>
<dbReference type="FunFam" id="3.20.20.70:FF:000048">
    <property type="entry name" value="Delta-aminolevulinic acid dehydratase"/>
    <property type="match status" value="1"/>
</dbReference>
<dbReference type="Gene3D" id="3.20.20.70">
    <property type="entry name" value="Aldolase class I"/>
    <property type="match status" value="1"/>
</dbReference>
<dbReference type="InterPro" id="IPR001731">
    <property type="entry name" value="ALAD"/>
</dbReference>
<dbReference type="InterPro" id="IPR030656">
    <property type="entry name" value="ALAD_AS"/>
</dbReference>
<dbReference type="InterPro" id="IPR013785">
    <property type="entry name" value="Aldolase_TIM"/>
</dbReference>
<dbReference type="NCBIfam" id="NF006762">
    <property type="entry name" value="PRK09283.1"/>
    <property type="match status" value="1"/>
</dbReference>
<dbReference type="PANTHER" id="PTHR11458">
    <property type="entry name" value="DELTA-AMINOLEVULINIC ACID DEHYDRATASE"/>
    <property type="match status" value="1"/>
</dbReference>
<dbReference type="PANTHER" id="PTHR11458:SF0">
    <property type="entry name" value="DELTA-AMINOLEVULINIC ACID DEHYDRATASE"/>
    <property type="match status" value="1"/>
</dbReference>
<dbReference type="Pfam" id="PF00490">
    <property type="entry name" value="ALAD"/>
    <property type="match status" value="1"/>
</dbReference>
<dbReference type="PIRSF" id="PIRSF001415">
    <property type="entry name" value="Porphbilin_synth"/>
    <property type="match status" value="1"/>
</dbReference>
<dbReference type="PRINTS" id="PR00144">
    <property type="entry name" value="DALDHYDRTASE"/>
</dbReference>
<dbReference type="SMART" id="SM01004">
    <property type="entry name" value="ALAD"/>
    <property type="match status" value="1"/>
</dbReference>
<dbReference type="SUPFAM" id="SSF51569">
    <property type="entry name" value="Aldolase"/>
    <property type="match status" value="1"/>
</dbReference>
<dbReference type="PROSITE" id="PS00169">
    <property type="entry name" value="D_ALA_DEHYDRATASE"/>
    <property type="match status" value="1"/>
</dbReference>
<sequence>MHTAEFLETEPTEISSVLAGGYNHPLLRQWQSERQLTKNMLIFPLFISDNPDDFTEIDSLPNINRIGVNRLKDYLKPLVAKGLRSVILFGVPLIPGTKDPVGTAADDPAGPVIQGIKFIREYFPELYIICDVCLCEYTSHGHCGVLYDDGTINRERSVSRLAAVAVNYAKAGAHCVAPSDMIDGRIRDIKRGLINANLAHKTFVLSYAAKFSGNLYGPFRDAACSAPSNGDRKCYQLPPAGRGLARRALERDMSEGADGIIVKPSTFYLDIMRDASEICKDLPICAYHVSGEYAMLHAAAEKGVVDLKTIAFESHQGFLRAGARLIITYLAPEFLDWLDEEN</sequence>
<comment type="function">
    <text>Catalyzes an early step in the biosynthesis of tetrapyrroles. Binds two molecules of 5-aminolevulinate per subunit, each at a distinct site, and catalyzes their condensation to form porphobilinogen.</text>
</comment>
<comment type="catalytic activity">
    <reaction>
        <text>2 5-aminolevulinate = porphobilinogen + 2 H2O + H(+)</text>
        <dbReference type="Rhea" id="RHEA:24064"/>
        <dbReference type="ChEBI" id="CHEBI:15377"/>
        <dbReference type="ChEBI" id="CHEBI:15378"/>
        <dbReference type="ChEBI" id="CHEBI:58126"/>
        <dbReference type="ChEBI" id="CHEBI:356416"/>
        <dbReference type="EC" id="4.2.1.24"/>
    </reaction>
</comment>
<comment type="cofactor">
    <cofactor evidence="1">
        <name>Zn(2+)</name>
        <dbReference type="ChEBI" id="CHEBI:29105"/>
    </cofactor>
    <text evidence="1">Binds 1 zinc ion per monomer.</text>
</comment>
<comment type="activity regulation">
    <text evidence="5">Inhibited by divalent lead ions.</text>
</comment>
<comment type="pathway">
    <text>Porphyrin-containing compound metabolism; protoporphyrin-IX biosynthesis; coproporphyrinogen-III from 5-aminolevulinate: step 1/4.</text>
</comment>
<comment type="subunit">
    <text evidence="1 2 3 5">Homooctamer.</text>
</comment>
<comment type="miscellaneous">
    <text evidence="4">Present with 11600 molecules/cell in log phase SD medium.</text>
</comment>
<comment type="similarity">
    <text evidence="6">Belongs to the ALAD family.</text>
</comment>
<name>HEM2_YEAST</name>
<evidence type="ECO:0000269" key="1">
    <source>
    </source>
</evidence>
<evidence type="ECO:0000269" key="2">
    <source>
    </source>
</evidence>
<evidence type="ECO:0000269" key="3">
    <source>
    </source>
</evidence>
<evidence type="ECO:0000269" key="4">
    <source>
    </source>
</evidence>
<evidence type="ECO:0000269" key="5">
    <source>
    </source>
</evidence>
<evidence type="ECO:0000305" key="6"/>
<evidence type="ECO:0007744" key="7">
    <source>
    </source>
</evidence>
<evidence type="ECO:0007829" key="8">
    <source>
        <dbReference type="PDB" id="1EB3"/>
    </source>
</evidence>
<evidence type="ECO:0007829" key="9">
    <source>
        <dbReference type="PDB" id="1H7N"/>
    </source>
</evidence>
<evidence type="ECO:0007829" key="10">
    <source>
        <dbReference type="PDB" id="1H7P"/>
    </source>
</evidence>
<evidence type="ECO:0007829" key="11">
    <source>
        <dbReference type="PDB" id="1OHL"/>
    </source>
</evidence>
<evidence type="ECO:0007829" key="12">
    <source>
        <dbReference type="PDB" id="1W31"/>
    </source>
</evidence>
<gene>
    <name type="primary">HEM2</name>
    <name type="ordered locus">YGL040C</name>
</gene>
<protein>
    <recommendedName>
        <fullName>Delta-aminolevulinic acid dehydratase</fullName>
        <shortName>ALADH</shortName>
        <ecNumber>4.2.1.24</ecNumber>
    </recommendedName>
    <alternativeName>
        <fullName>Porphobilinogen synthase</fullName>
    </alternativeName>
</protein>
<feature type="chain" id="PRO_0000140534" description="Delta-aminolevulinic acid dehydratase">
    <location>
        <begin position="1"/>
        <end position="342"/>
    </location>
</feature>
<feature type="active site" description="Schiff-base intermediate with substrate">
    <location>
        <position position="210"/>
    </location>
</feature>
<feature type="active site" description="Schiff-base intermediate with substrate">
    <location>
        <position position="263"/>
    </location>
</feature>
<feature type="binding site">
    <location>
        <position position="133"/>
    </location>
    <ligand>
        <name>Zn(2+)</name>
        <dbReference type="ChEBI" id="CHEBI:29105"/>
        <note>catalytic</note>
    </ligand>
</feature>
<feature type="binding site">
    <location>
        <position position="135"/>
    </location>
    <ligand>
        <name>Zn(2+)</name>
        <dbReference type="ChEBI" id="CHEBI:29105"/>
        <note>catalytic</note>
    </ligand>
</feature>
<feature type="binding site">
    <location>
        <position position="143"/>
    </location>
    <ligand>
        <name>Zn(2+)</name>
        <dbReference type="ChEBI" id="CHEBI:29105"/>
        <note>catalytic</note>
    </ligand>
</feature>
<feature type="binding site">
    <location>
        <position position="220"/>
    </location>
    <ligand>
        <name>5-aminolevulinate</name>
        <dbReference type="ChEBI" id="CHEBI:356416"/>
        <label>1</label>
    </ligand>
</feature>
<feature type="binding site">
    <location>
        <position position="232"/>
    </location>
    <ligand>
        <name>5-aminolevulinate</name>
        <dbReference type="ChEBI" id="CHEBI:356416"/>
        <label>1</label>
    </ligand>
</feature>
<feature type="binding site">
    <location>
        <position position="290"/>
    </location>
    <ligand>
        <name>5-aminolevulinate</name>
        <dbReference type="ChEBI" id="CHEBI:356416"/>
        <label>2</label>
    </ligand>
</feature>
<feature type="binding site">
    <location>
        <position position="329"/>
    </location>
    <ligand>
        <name>5-aminolevulinate</name>
        <dbReference type="ChEBI" id="CHEBI:356416"/>
        <label>2</label>
    </ligand>
</feature>
<feature type="modified residue" description="Phosphoserine" evidence="7">
    <location>
        <position position="254"/>
    </location>
</feature>
<feature type="sequence conflict" description="In Ref. 1; AAA34669." evidence="6" ref="1">
    <original>G</original>
    <variation>D</variation>
    <location>
        <position position="291"/>
    </location>
</feature>
<feature type="helix" evidence="9">
    <location>
        <begin position="14"/>
        <end position="16"/>
    </location>
</feature>
<feature type="helix" evidence="9">
    <location>
        <begin position="19"/>
        <end position="21"/>
    </location>
</feature>
<feature type="strand" evidence="9">
    <location>
        <begin position="22"/>
        <end position="24"/>
    </location>
</feature>
<feature type="helix" evidence="9">
    <location>
        <begin position="25"/>
        <end position="30"/>
    </location>
</feature>
<feature type="strand" evidence="8">
    <location>
        <begin position="32"/>
        <end position="34"/>
    </location>
</feature>
<feature type="helix" evidence="9">
    <location>
        <begin position="38"/>
        <end position="40"/>
    </location>
</feature>
<feature type="strand" evidence="9">
    <location>
        <begin position="41"/>
        <end position="50"/>
    </location>
</feature>
<feature type="strand" evidence="9">
    <location>
        <begin position="54"/>
        <end position="56"/>
    </location>
</feature>
<feature type="strand" evidence="12">
    <location>
        <begin position="58"/>
        <end position="60"/>
    </location>
</feature>
<feature type="strand" evidence="9">
    <location>
        <begin position="64"/>
        <end position="66"/>
    </location>
</feature>
<feature type="helix" evidence="9">
    <location>
        <begin position="68"/>
        <end position="80"/>
    </location>
</feature>
<feature type="strand" evidence="9">
    <location>
        <begin position="85"/>
        <end position="91"/>
    </location>
</feature>
<feature type="helix" evidence="9">
    <location>
        <begin position="103"/>
        <end position="106"/>
    </location>
</feature>
<feature type="helix" evidence="9">
    <location>
        <begin position="111"/>
        <end position="122"/>
    </location>
</feature>
<feature type="strand" evidence="9">
    <location>
        <begin position="126"/>
        <end position="132"/>
    </location>
</feature>
<feature type="turn" evidence="9">
    <location>
        <begin position="135"/>
        <end position="137"/>
    </location>
</feature>
<feature type="strand" evidence="11">
    <location>
        <begin position="138"/>
        <end position="140"/>
    </location>
</feature>
<feature type="strand" evidence="12">
    <location>
        <begin position="142"/>
        <end position="144"/>
    </location>
</feature>
<feature type="strand" evidence="9">
    <location>
        <begin position="150"/>
        <end position="152"/>
    </location>
</feature>
<feature type="helix" evidence="9">
    <location>
        <begin position="154"/>
        <end position="171"/>
    </location>
</feature>
<feature type="strand" evidence="9">
    <location>
        <begin position="174"/>
        <end position="178"/>
    </location>
</feature>
<feature type="helix" evidence="9">
    <location>
        <begin position="185"/>
        <end position="195"/>
    </location>
</feature>
<feature type="turn" evidence="9">
    <location>
        <begin position="199"/>
        <end position="201"/>
    </location>
</feature>
<feature type="strand" evidence="9">
    <location>
        <begin position="203"/>
        <end position="211"/>
    </location>
</feature>
<feature type="strand" evidence="10">
    <location>
        <begin position="213"/>
        <end position="215"/>
    </location>
</feature>
<feature type="helix" evidence="9">
    <location>
        <begin position="217"/>
        <end position="223"/>
    </location>
</feature>
<feature type="strand" evidence="9">
    <location>
        <begin position="228"/>
        <end position="230"/>
    </location>
</feature>
<feature type="turn" evidence="9">
    <location>
        <begin position="233"/>
        <end position="235"/>
    </location>
</feature>
<feature type="helix" evidence="9">
    <location>
        <begin position="242"/>
        <end position="254"/>
    </location>
</feature>
<feature type="strand" evidence="9">
    <location>
        <begin position="258"/>
        <end position="265"/>
    </location>
</feature>
<feature type="helix" evidence="9">
    <location>
        <begin position="266"/>
        <end position="268"/>
    </location>
</feature>
<feature type="helix" evidence="9">
    <location>
        <begin position="269"/>
        <end position="278"/>
    </location>
</feature>
<feature type="turn" evidence="9">
    <location>
        <begin position="279"/>
        <end position="281"/>
    </location>
</feature>
<feature type="strand" evidence="9">
    <location>
        <begin position="284"/>
        <end position="288"/>
    </location>
</feature>
<feature type="helix" evidence="9">
    <location>
        <begin position="290"/>
        <end position="301"/>
    </location>
</feature>
<feature type="helix" evidence="9">
    <location>
        <begin position="307"/>
        <end position="320"/>
    </location>
</feature>
<feature type="strand" evidence="9">
    <location>
        <begin position="324"/>
        <end position="328"/>
    </location>
</feature>
<feature type="helix" evidence="9">
    <location>
        <begin position="331"/>
        <end position="337"/>
    </location>
</feature>
<accession>P05373</accession>
<accession>D6VU99</accession>
<keyword id="KW-0002">3D-structure</keyword>
<keyword id="KW-0350">Heme biosynthesis</keyword>
<keyword id="KW-0456">Lyase</keyword>
<keyword id="KW-0479">Metal-binding</keyword>
<keyword id="KW-0597">Phosphoprotein</keyword>
<keyword id="KW-0627">Porphyrin biosynthesis</keyword>
<keyword id="KW-1185">Reference proteome</keyword>
<keyword id="KW-0862">Zinc</keyword>
<proteinExistence type="evidence at protein level"/>
<reference key="1">
    <citation type="journal article" date="1987" name="J. Biol. Chem.">
        <title>Characterization of the yeast HEM2 gene and transcriptional regulation of COX5 and COR1 by heme.</title>
        <authorList>
            <person name="Myers A.M."/>
            <person name="Crivellone M.D."/>
            <person name="Koerner T.J."/>
            <person name="Tzagoloff A."/>
        </authorList>
    </citation>
    <scope>NUCLEOTIDE SEQUENCE [GENOMIC DNA]</scope>
</reference>
<reference key="2">
    <citation type="journal article" date="1997" name="Nature">
        <title>The nucleotide sequence of Saccharomyces cerevisiae chromosome VII.</title>
        <authorList>
            <person name="Tettelin H."/>
            <person name="Agostoni-Carbone M.L."/>
            <person name="Albermann K."/>
            <person name="Albers M."/>
            <person name="Arroyo J."/>
            <person name="Backes U."/>
            <person name="Barreiros T."/>
            <person name="Bertani I."/>
            <person name="Bjourson A.J."/>
            <person name="Brueckner M."/>
            <person name="Bruschi C.V."/>
            <person name="Carignani G."/>
            <person name="Castagnoli L."/>
            <person name="Cerdan E."/>
            <person name="Clemente M.L."/>
            <person name="Coblenz A."/>
            <person name="Coglievina M."/>
            <person name="Coissac E."/>
            <person name="Defoor E."/>
            <person name="Del Bino S."/>
            <person name="Delius H."/>
            <person name="Delneri D."/>
            <person name="de Wergifosse P."/>
            <person name="Dujon B."/>
            <person name="Durand P."/>
            <person name="Entian K.-D."/>
            <person name="Eraso P."/>
            <person name="Escribano V."/>
            <person name="Fabiani L."/>
            <person name="Fartmann B."/>
            <person name="Feroli F."/>
            <person name="Feuermann M."/>
            <person name="Frontali L."/>
            <person name="Garcia-Gonzalez M."/>
            <person name="Garcia-Saez M.I."/>
            <person name="Goffeau A."/>
            <person name="Guerreiro P."/>
            <person name="Hani J."/>
            <person name="Hansen M."/>
            <person name="Hebling U."/>
            <person name="Hernandez K."/>
            <person name="Heumann K."/>
            <person name="Hilger F."/>
            <person name="Hofmann B."/>
            <person name="Indge K.J."/>
            <person name="James C.M."/>
            <person name="Klima R."/>
            <person name="Koetter P."/>
            <person name="Kramer B."/>
            <person name="Kramer W."/>
            <person name="Lauquin G."/>
            <person name="Leuther H."/>
            <person name="Louis E.J."/>
            <person name="Maillier E."/>
            <person name="Marconi A."/>
            <person name="Martegani E."/>
            <person name="Mazon M.J."/>
            <person name="Mazzoni C."/>
            <person name="McReynolds A.D.K."/>
            <person name="Melchioretto P."/>
            <person name="Mewes H.-W."/>
            <person name="Minenkova O."/>
            <person name="Mueller-Auer S."/>
            <person name="Nawrocki A."/>
            <person name="Netter P."/>
            <person name="Neu R."/>
            <person name="Nombela C."/>
            <person name="Oliver S.G."/>
            <person name="Panzeri L."/>
            <person name="Paoluzi S."/>
            <person name="Plevani P."/>
            <person name="Portetelle D."/>
            <person name="Portillo F."/>
            <person name="Potier S."/>
            <person name="Purnelle B."/>
            <person name="Rieger M."/>
            <person name="Riles L."/>
            <person name="Rinaldi T."/>
            <person name="Robben J."/>
            <person name="Rodrigues-Pousada C."/>
            <person name="Rodriguez-Belmonte E."/>
            <person name="Rodriguez-Torres A.M."/>
            <person name="Rose M."/>
            <person name="Ruzzi M."/>
            <person name="Saliola M."/>
            <person name="Sanchez-Perez M."/>
            <person name="Schaefer B."/>
            <person name="Schaefer M."/>
            <person name="Scharfe M."/>
            <person name="Schmidheini T."/>
            <person name="Schreer A."/>
            <person name="Skala J."/>
            <person name="Souciet J.-L."/>
            <person name="Steensma H.Y."/>
            <person name="Talla E."/>
            <person name="Thierry A."/>
            <person name="Vandenbol M."/>
            <person name="van der Aart Q.J.M."/>
            <person name="Van Dyck L."/>
            <person name="Vanoni M."/>
            <person name="Verhasselt P."/>
            <person name="Voet M."/>
            <person name="Volckaert G."/>
            <person name="Wambutt R."/>
            <person name="Watson M.D."/>
            <person name="Weber N."/>
            <person name="Wedler E."/>
            <person name="Wedler H."/>
            <person name="Wipfli P."/>
            <person name="Wolf K."/>
            <person name="Wright L.F."/>
            <person name="Zaccaria P."/>
            <person name="Zimmermann M."/>
            <person name="Zollner A."/>
            <person name="Kleine K."/>
        </authorList>
    </citation>
    <scope>NUCLEOTIDE SEQUENCE [LARGE SCALE GENOMIC DNA]</scope>
    <source>
        <strain>ATCC 204508 / S288c</strain>
    </source>
</reference>
<reference key="3">
    <citation type="journal article" date="2014" name="G3 (Bethesda)">
        <title>The reference genome sequence of Saccharomyces cerevisiae: Then and now.</title>
        <authorList>
            <person name="Engel S.R."/>
            <person name="Dietrich F.S."/>
            <person name="Fisk D.G."/>
            <person name="Binkley G."/>
            <person name="Balakrishnan R."/>
            <person name="Costanzo M.C."/>
            <person name="Dwight S.S."/>
            <person name="Hitz B.C."/>
            <person name="Karra K."/>
            <person name="Nash R.S."/>
            <person name="Weng S."/>
            <person name="Wong E.D."/>
            <person name="Lloyd P."/>
            <person name="Skrzypek M.S."/>
            <person name="Miyasato S.R."/>
            <person name="Simison M."/>
            <person name="Cherry J.M."/>
        </authorList>
    </citation>
    <scope>GENOME REANNOTATION</scope>
    <source>
        <strain>ATCC 204508 / S288c</strain>
    </source>
</reference>
<reference key="4">
    <citation type="journal article" date="2007" name="Genome Res.">
        <title>Approaching a complete repository of sequence-verified protein-encoding clones for Saccharomyces cerevisiae.</title>
        <authorList>
            <person name="Hu Y."/>
            <person name="Rolfs A."/>
            <person name="Bhullar B."/>
            <person name="Murthy T.V.S."/>
            <person name="Zhu C."/>
            <person name="Berger M.F."/>
            <person name="Camargo A.A."/>
            <person name="Kelley F."/>
            <person name="McCarron S."/>
            <person name="Jepson D."/>
            <person name="Richardson A."/>
            <person name="Raphael J."/>
            <person name="Moreira D."/>
            <person name="Taycher E."/>
            <person name="Zuo D."/>
            <person name="Mohr S."/>
            <person name="Kane M.F."/>
            <person name="Williamson J."/>
            <person name="Simpson A.J.G."/>
            <person name="Bulyk M.L."/>
            <person name="Harlow E."/>
            <person name="Marsischky G."/>
            <person name="Kolodner R.D."/>
            <person name="LaBaer J."/>
        </authorList>
    </citation>
    <scope>NUCLEOTIDE SEQUENCE [GENOMIC DNA]</scope>
    <source>
        <strain>ATCC 204508 / S288c</strain>
    </source>
</reference>
<reference key="5">
    <citation type="journal article" date="1997" name="Yeast">
        <title>The characterization of two new clusters of duplicated genes suggests a 'Lego' organization of the yeast Saccharomyces cerevisiae chromosomes.</title>
        <authorList>
            <person name="Feuermann M."/>
            <person name="de Montigny J."/>
            <person name="Potier S."/>
            <person name="Souciet J.-L."/>
        </authorList>
    </citation>
    <scope>NUCLEOTIDE SEQUENCE [GENOMIC DNA] OF 1-41</scope>
    <source>
        <strain>ATCC 204508 / S288c</strain>
    </source>
</reference>
<reference key="6">
    <citation type="journal article" date="2003" name="Nature">
        <title>Global analysis of protein expression in yeast.</title>
        <authorList>
            <person name="Ghaemmaghami S."/>
            <person name="Huh W.-K."/>
            <person name="Bower K."/>
            <person name="Howson R.W."/>
            <person name="Belle A."/>
            <person name="Dephoure N."/>
            <person name="O'Shea E.K."/>
            <person name="Weissman J.S."/>
        </authorList>
    </citation>
    <scope>LEVEL OF PROTEIN EXPRESSION [LARGE SCALE ANALYSIS]</scope>
</reference>
<reference key="7">
    <citation type="journal article" date="2008" name="Mol. Cell. Proteomics">
        <title>A multidimensional chromatography technology for in-depth phosphoproteome analysis.</title>
        <authorList>
            <person name="Albuquerque C.P."/>
            <person name="Smolka M.B."/>
            <person name="Payne S.H."/>
            <person name="Bafna V."/>
            <person name="Eng J."/>
            <person name="Zhou H."/>
        </authorList>
    </citation>
    <scope>PHOSPHORYLATION [LARGE SCALE ANALYSIS] AT SER-254</scope>
    <scope>IDENTIFICATION BY MASS SPECTROMETRY [LARGE SCALE ANALYSIS]</scope>
</reference>
<reference key="8">
    <citation type="journal article" date="2012" name="Proc. Natl. Acad. Sci. U.S.A.">
        <title>N-terminal acetylome analyses and functional insights of the N-terminal acetyltransferase NatB.</title>
        <authorList>
            <person name="Van Damme P."/>
            <person name="Lasa M."/>
            <person name="Polevoda B."/>
            <person name="Gazquez C."/>
            <person name="Elosegui-Artola A."/>
            <person name="Kim D.S."/>
            <person name="De Juan-Pardo E."/>
            <person name="Demeyer K."/>
            <person name="Hole K."/>
            <person name="Larrea E."/>
            <person name="Timmerman E."/>
            <person name="Prieto J."/>
            <person name="Arnesen T."/>
            <person name="Sherman F."/>
            <person name="Gevaert K."/>
            <person name="Aldabe R."/>
        </authorList>
    </citation>
    <scope>IDENTIFICATION BY MASS SPECTROMETRY [LARGE SCALE ANALYSIS]</scope>
</reference>
<reference key="9">
    <citation type="journal article" date="1997" name="Nat. Struct. Biol.">
        <title>X-ray structure of 5-aminolaevulinate dehydratase, a hybrid aldolase.</title>
        <authorList>
            <person name="Erskine P.T."/>
            <person name="Senior N."/>
            <person name="Awan S."/>
            <person name="Lambert R."/>
            <person name="Lewis G."/>
            <person name="Tickle I.J."/>
            <person name="Sarwar M."/>
            <person name="Spencer P."/>
            <person name="Thomas P."/>
            <person name="Warren M.J."/>
            <person name="Shoolingin-Jordan P.M."/>
            <person name="Wood S.P."/>
            <person name="Cooper J.B."/>
        </authorList>
    </citation>
    <scope>X-RAY CRYSTALLOGRAPHY (2.3 ANGSTROMS) IN COMPLEX WITH LEAD IONS</scope>
    <scope>SUBUNIT</scope>
    <scope>ACTIVITY REGULATION</scope>
    <scope>ACTIVE SITE</scope>
</reference>
<reference key="10">
    <citation type="journal article" date="1999" name="Protein Sci.">
        <title>The Schiff base complex of yeast 5-aminolaevulinic acid dehydratase with laevulinic acid.</title>
        <authorList>
            <person name="Erskine P.T."/>
            <person name="Newbold R."/>
            <person name="Roper J."/>
            <person name="Coker A."/>
            <person name="Warren M.J."/>
            <person name="Shoolingin-Jordan P.M."/>
            <person name="Wood S.P."/>
            <person name="Cooper J.B."/>
        </authorList>
    </citation>
    <scope>X-RAY CRYSTALLOGRAPHY (2.15 ANGSTROMS) IN COMPLEX WITH LAEVULINIC ACID AND ZINC IONS</scope>
    <scope>COFACTOR</scope>
    <scope>ACTIVE SITE</scope>
</reference>
<reference key="11">
    <citation type="journal article" date="2000" name="Acta Crystallogr. D">
        <title>MAD analyses of yeast 5-aminolaevulinate dehydratase: their use in structure determination and in defining the metal-binding sites.</title>
        <authorList>
            <person name="Erskine P.T."/>
            <person name="Duke E.M."/>
            <person name="Tickle I.J."/>
            <person name="Senior N.M."/>
            <person name="Warren M.J."/>
            <person name="Cooper J.B."/>
        </authorList>
    </citation>
    <scope>X-RAY CRYSTALLOGRAPHY (2.5 ANGSTROMS) IN COMPLEX WITH MERCURY IONS</scope>
</reference>
<reference key="12">
    <citation type="journal article" date="2001" name="FEBS Lett.">
        <title>The X-ray structure of yeast 5-aminolaevulinic acid dehydratase complexed with two diacid inhibitors.</title>
        <authorList>
            <person name="Erskine P.T."/>
            <person name="Coates L."/>
            <person name="Newbold R."/>
            <person name="Brindley A.A."/>
            <person name="Stauffer F."/>
            <person name="Wood S.P."/>
            <person name="Warren M.J."/>
            <person name="Cooper J.B."/>
            <person name="Shoolingin-Jordan P.M."/>
            <person name="Neier R."/>
        </authorList>
    </citation>
    <scope>X-RAY CRYSTALLOGRAPHY (1.75 ANGSTROMS) IN COMPLEXES WITH ZINC IONS; 4-OXOSEBACIC ACID AND 4,7-DIOXOSEBACIC ACID</scope>
    <scope>ACTIVE SITE</scope>
</reference>
<reference key="13">
    <citation type="journal article" date="2001" name="J. Mol. Biol.">
        <title>The X-ray structure of yeast 5-aminolaevulinic acid dehydratase complexed with substrate and three inhibitors.</title>
        <authorList>
            <person name="Erskine P.T."/>
            <person name="Newbold R."/>
            <person name="Brindley A.A."/>
            <person name="Wood S.P."/>
            <person name="Shoolingin-Jordan P.M."/>
            <person name="Warren M.J."/>
            <person name="Cooper J.B."/>
        </authorList>
    </citation>
    <scope>X-RAY CRYSTALLOGRAPHY (1.6 ANGSTROMS) IN COMPLEXES WITH ZINC IONS; 5-AMINOLAEVULINIC ACID AND SUBSTRATE ANALOGS</scope>
    <scope>ACTIVE SITE</scope>
    <scope>SUBUNIT</scope>
</reference>
<organism>
    <name type="scientific">Saccharomyces cerevisiae (strain ATCC 204508 / S288c)</name>
    <name type="common">Baker's yeast</name>
    <dbReference type="NCBI Taxonomy" id="559292"/>
    <lineage>
        <taxon>Eukaryota</taxon>
        <taxon>Fungi</taxon>
        <taxon>Dikarya</taxon>
        <taxon>Ascomycota</taxon>
        <taxon>Saccharomycotina</taxon>
        <taxon>Saccharomycetes</taxon>
        <taxon>Saccharomycetales</taxon>
        <taxon>Saccharomycetaceae</taxon>
        <taxon>Saccharomyces</taxon>
    </lineage>
</organism>